<protein>
    <recommendedName>
        <fullName evidence="1">2-C-methyl-D-erythritol 4-phosphate cytidylyltransferase</fullName>
        <ecNumber evidence="1">2.7.7.60</ecNumber>
    </recommendedName>
    <alternativeName>
        <fullName evidence="1">4-diphosphocytidyl-2C-methyl-D-erythritol synthase</fullName>
    </alternativeName>
    <alternativeName>
        <fullName evidence="1">MEP cytidylyltransferase</fullName>
        <shortName evidence="1">MCT</shortName>
    </alternativeName>
</protein>
<organism>
    <name type="scientific">Cereibacter sphaeroides (strain ATCC 17023 / DSM 158 / JCM 6121 / CCUG 31486 / LMG 2827 / NBRC 12203 / NCIMB 8253 / ATH 2.4.1.)</name>
    <name type="common">Rhodobacter sphaeroides</name>
    <dbReference type="NCBI Taxonomy" id="272943"/>
    <lineage>
        <taxon>Bacteria</taxon>
        <taxon>Pseudomonadati</taxon>
        <taxon>Pseudomonadota</taxon>
        <taxon>Alphaproteobacteria</taxon>
        <taxon>Rhodobacterales</taxon>
        <taxon>Paracoccaceae</taxon>
        <taxon>Cereibacter</taxon>
    </lineage>
</organism>
<reference key="1">
    <citation type="submission" date="2005-09" db="EMBL/GenBank/DDBJ databases">
        <title>Complete sequence of chromosome 1 of Rhodobacter sphaeroides 2.4.1.</title>
        <authorList>
            <person name="Copeland A."/>
            <person name="Lucas S."/>
            <person name="Lapidus A."/>
            <person name="Barry K."/>
            <person name="Detter J.C."/>
            <person name="Glavina T."/>
            <person name="Hammon N."/>
            <person name="Israni S."/>
            <person name="Pitluck S."/>
            <person name="Richardson P."/>
            <person name="Mackenzie C."/>
            <person name="Choudhary M."/>
            <person name="Larimer F."/>
            <person name="Hauser L.J."/>
            <person name="Land M."/>
            <person name="Donohue T.J."/>
            <person name="Kaplan S."/>
        </authorList>
    </citation>
    <scope>NUCLEOTIDE SEQUENCE [LARGE SCALE GENOMIC DNA]</scope>
    <source>
        <strain>ATCC 17023 / DSM 158 / JCM 6121 / CCUG 31486 / LMG 2827 / NBRC 12203 / NCIMB 8253 / ATH 2.4.1.</strain>
    </source>
</reference>
<keyword id="KW-0414">Isoprene biosynthesis</keyword>
<keyword id="KW-0548">Nucleotidyltransferase</keyword>
<keyword id="KW-1185">Reference proteome</keyword>
<keyword id="KW-0808">Transferase</keyword>
<gene>
    <name evidence="1" type="primary">ispD</name>
    <name type="ordered locus">RHOS4_14070</name>
    <name type="ORF">RSP_2835</name>
</gene>
<comment type="function">
    <text evidence="1">Catalyzes the formation of 4-diphosphocytidyl-2-C-methyl-D-erythritol from CTP and 2-C-methyl-D-erythritol 4-phosphate (MEP).</text>
</comment>
<comment type="catalytic activity">
    <reaction evidence="1">
        <text>2-C-methyl-D-erythritol 4-phosphate + CTP + H(+) = 4-CDP-2-C-methyl-D-erythritol + diphosphate</text>
        <dbReference type="Rhea" id="RHEA:13429"/>
        <dbReference type="ChEBI" id="CHEBI:15378"/>
        <dbReference type="ChEBI" id="CHEBI:33019"/>
        <dbReference type="ChEBI" id="CHEBI:37563"/>
        <dbReference type="ChEBI" id="CHEBI:57823"/>
        <dbReference type="ChEBI" id="CHEBI:58262"/>
        <dbReference type="EC" id="2.7.7.60"/>
    </reaction>
</comment>
<comment type="pathway">
    <text evidence="1">Isoprenoid biosynthesis; isopentenyl diphosphate biosynthesis via DXP pathway; isopentenyl diphosphate from 1-deoxy-D-xylulose 5-phosphate: step 2/6.</text>
</comment>
<comment type="similarity">
    <text evidence="1">Belongs to the IspD/TarI cytidylyltransferase family. IspD subfamily.</text>
</comment>
<feature type="chain" id="PRO_0000237815" description="2-C-methyl-D-erythritol 4-phosphate cytidylyltransferase">
    <location>
        <begin position="1"/>
        <end position="225"/>
    </location>
</feature>
<feature type="site" description="Transition state stabilizer" evidence="1">
    <location>
        <position position="15"/>
    </location>
</feature>
<feature type="site" description="Transition state stabilizer" evidence="1">
    <location>
        <position position="22"/>
    </location>
</feature>
<feature type="site" description="Positions MEP for the nucleophilic attack" evidence="1">
    <location>
        <position position="152"/>
    </location>
</feature>
<feature type="site" description="Positions MEP for the nucleophilic attack" evidence="1">
    <location>
        <position position="205"/>
    </location>
</feature>
<sequence length="225" mass="23098">MTTAAIIVAAGRGTRAGGDLPKQWQPLAGRPVLAHTLAAFRAAAGVSRTLLVIHPDDRARAEALPGVAEGKVELVEGGASRDASVRNALEALAGAGIERVLIHDGARPLVAPELIARTLAALETAPGAAPAVPVSDALWRGEGGRVVGTQDRTGLFRAQTPQAFRYEAILAAHRAHPGGAADDVEVARAAGLEVAIVEGCEDNLKVTYPGDFARAERLLALAAGL</sequence>
<name>ISPD_CERS4</name>
<proteinExistence type="inferred from homology"/>
<accession>Q3J2K9</accession>
<dbReference type="EC" id="2.7.7.60" evidence="1"/>
<dbReference type="EMBL" id="CP000143">
    <property type="protein sequence ID" value="ABA78975.1"/>
    <property type="molecule type" value="Genomic_DNA"/>
</dbReference>
<dbReference type="RefSeq" id="WP_011337763.1">
    <property type="nucleotide sequence ID" value="NC_007493.2"/>
</dbReference>
<dbReference type="RefSeq" id="YP_352876.1">
    <property type="nucleotide sequence ID" value="NC_007493.2"/>
</dbReference>
<dbReference type="SMR" id="Q3J2K9"/>
<dbReference type="STRING" id="272943.RSP_2835"/>
<dbReference type="EnsemblBacteria" id="ABA78975">
    <property type="protein sequence ID" value="ABA78975"/>
    <property type="gene ID" value="RSP_2835"/>
</dbReference>
<dbReference type="GeneID" id="3720551"/>
<dbReference type="KEGG" id="rsp:RSP_2835"/>
<dbReference type="PATRIC" id="fig|272943.9.peg.1744"/>
<dbReference type="eggNOG" id="COG1211">
    <property type="taxonomic scope" value="Bacteria"/>
</dbReference>
<dbReference type="OrthoDB" id="9804336at2"/>
<dbReference type="PhylomeDB" id="Q3J2K9"/>
<dbReference type="UniPathway" id="UPA00056">
    <property type="reaction ID" value="UER00093"/>
</dbReference>
<dbReference type="Proteomes" id="UP000002703">
    <property type="component" value="Chromosome 1"/>
</dbReference>
<dbReference type="GO" id="GO:0050518">
    <property type="term" value="F:2-C-methyl-D-erythritol 4-phosphate cytidylyltransferase activity"/>
    <property type="evidence" value="ECO:0007669"/>
    <property type="project" value="UniProtKB-UniRule"/>
</dbReference>
<dbReference type="GO" id="GO:0019288">
    <property type="term" value="P:isopentenyl diphosphate biosynthetic process, methylerythritol 4-phosphate pathway"/>
    <property type="evidence" value="ECO:0007669"/>
    <property type="project" value="UniProtKB-UniRule"/>
</dbReference>
<dbReference type="CDD" id="cd02516">
    <property type="entry name" value="CDP-ME_synthetase"/>
    <property type="match status" value="1"/>
</dbReference>
<dbReference type="FunFam" id="3.90.550.10:FF:000003">
    <property type="entry name" value="2-C-methyl-D-erythritol 4-phosphate cytidylyltransferase"/>
    <property type="match status" value="1"/>
</dbReference>
<dbReference type="Gene3D" id="3.90.550.10">
    <property type="entry name" value="Spore Coat Polysaccharide Biosynthesis Protein SpsA, Chain A"/>
    <property type="match status" value="1"/>
</dbReference>
<dbReference type="HAMAP" id="MF_00108">
    <property type="entry name" value="IspD"/>
    <property type="match status" value="1"/>
</dbReference>
<dbReference type="InterPro" id="IPR001228">
    <property type="entry name" value="IspD"/>
</dbReference>
<dbReference type="InterPro" id="IPR034683">
    <property type="entry name" value="IspD/TarI"/>
</dbReference>
<dbReference type="InterPro" id="IPR050088">
    <property type="entry name" value="IspD/TarI_cytidylyltransf_bact"/>
</dbReference>
<dbReference type="InterPro" id="IPR018294">
    <property type="entry name" value="ISPD_synthase_CS"/>
</dbReference>
<dbReference type="InterPro" id="IPR029044">
    <property type="entry name" value="Nucleotide-diphossugar_trans"/>
</dbReference>
<dbReference type="NCBIfam" id="TIGR00453">
    <property type="entry name" value="ispD"/>
    <property type="match status" value="1"/>
</dbReference>
<dbReference type="PANTHER" id="PTHR32125">
    <property type="entry name" value="2-C-METHYL-D-ERYTHRITOL 4-PHOSPHATE CYTIDYLYLTRANSFERASE, CHLOROPLASTIC"/>
    <property type="match status" value="1"/>
</dbReference>
<dbReference type="PANTHER" id="PTHR32125:SF4">
    <property type="entry name" value="2-C-METHYL-D-ERYTHRITOL 4-PHOSPHATE CYTIDYLYLTRANSFERASE, CHLOROPLASTIC"/>
    <property type="match status" value="1"/>
</dbReference>
<dbReference type="Pfam" id="PF01128">
    <property type="entry name" value="IspD"/>
    <property type="match status" value="1"/>
</dbReference>
<dbReference type="SUPFAM" id="SSF53448">
    <property type="entry name" value="Nucleotide-diphospho-sugar transferases"/>
    <property type="match status" value="1"/>
</dbReference>
<dbReference type="PROSITE" id="PS01295">
    <property type="entry name" value="ISPD"/>
    <property type="match status" value="1"/>
</dbReference>
<evidence type="ECO:0000255" key="1">
    <source>
        <dbReference type="HAMAP-Rule" id="MF_00108"/>
    </source>
</evidence>